<organism>
    <name type="scientific">Drysdalia coronoides</name>
    <name type="common">White-lipped snake</name>
    <name type="synonym">Hoplocephalus coronoides</name>
    <dbReference type="NCBI Taxonomy" id="66186"/>
    <lineage>
        <taxon>Eukaryota</taxon>
        <taxon>Metazoa</taxon>
        <taxon>Chordata</taxon>
        <taxon>Craniata</taxon>
        <taxon>Vertebrata</taxon>
        <taxon>Euteleostomi</taxon>
        <taxon>Lepidosauria</taxon>
        <taxon>Squamata</taxon>
        <taxon>Bifurcata</taxon>
        <taxon>Unidentata</taxon>
        <taxon>Episquamata</taxon>
        <taxon>Toxicofera</taxon>
        <taxon>Serpentes</taxon>
        <taxon>Colubroidea</taxon>
        <taxon>Elapidae</taxon>
        <taxon>Notechinae</taxon>
        <taxon>Drysdalia</taxon>
    </lineage>
</organism>
<evidence type="ECO:0000250" key="1"/>
<evidence type="ECO:0000255" key="2"/>
<evidence type="ECO:0000255" key="3">
    <source>
        <dbReference type="PROSITE-ProRule" id="PRU01005"/>
    </source>
</evidence>
<evidence type="ECO:0000305" key="4"/>
<feature type="signal peptide" evidence="2">
    <location>
        <begin position="1"/>
        <end position="19"/>
    </location>
</feature>
<feature type="chain" id="PRO_0000425514" description="Cysteine-rich venom protein">
    <location>
        <begin position="20"/>
        <end position="238"/>
    </location>
</feature>
<feature type="domain" description="SCP">
    <location>
        <begin position="38"/>
        <end position="164"/>
    </location>
</feature>
<feature type="domain" description="ShKT" evidence="3">
    <location>
        <begin position="200"/>
        <end position="233"/>
    </location>
</feature>
<feature type="disulfide bond" evidence="3">
    <location>
        <begin position="75"/>
        <end position="153"/>
    </location>
</feature>
<feature type="disulfide bond" evidence="3">
    <location>
        <begin position="92"/>
        <end position="165"/>
    </location>
</feature>
<feature type="disulfide bond" evidence="3">
    <location>
        <begin position="148"/>
        <end position="162"/>
    </location>
</feature>
<feature type="disulfide bond" evidence="3">
    <location>
        <begin position="184"/>
        <end position="191"/>
    </location>
</feature>
<feature type="disulfide bond" evidence="3">
    <location>
        <begin position="187"/>
        <end position="196"/>
    </location>
</feature>
<feature type="disulfide bond" evidence="3">
    <location>
        <begin position="200"/>
        <end position="233"/>
    </location>
</feature>
<feature type="disulfide bond" evidence="3">
    <location>
        <begin position="209"/>
        <end position="227"/>
    </location>
</feature>
<feature type="disulfide bond" evidence="3">
    <location>
        <begin position="218"/>
        <end position="231"/>
    </location>
</feature>
<protein>
    <recommendedName>
        <fullName>Cysteine-rich venom protein</fullName>
        <shortName>CRVP</shortName>
    </recommendedName>
    <alternativeName>
        <fullName>Cysteine-rich secretory protein</fullName>
        <shortName>CRISP</shortName>
    </alternativeName>
</protein>
<comment type="function">
    <text evidence="1">Blocks olfactory (CNGA2) and retinal (CNGA1) CNG channel currents. Does not affect neither depolarization- nor caffeine-induced contraction of smooth muscle (By similarity).</text>
</comment>
<comment type="subcellular location">
    <subcellularLocation>
        <location>Secreted</location>
    </subcellularLocation>
</comment>
<comment type="tissue specificity">
    <text>Expressed by the venom gland.</text>
</comment>
<comment type="similarity">
    <text evidence="4">Belongs to the CRISP family.</text>
</comment>
<name>CRVP_DRYCN</name>
<proteinExistence type="evidence at protein level"/>
<reference key="1">
    <citation type="journal article" date="2011" name="J. Proteome Res.">
        <title>Identification of novel proteins from the venom of a cryptic snake Drysdalia coronoides by a combined transcriptomics and proteomics approach.</title>
        <authorList>
            <person name="Chatrath S.T."/>
            <person name="Chapeaurouge A."/>
            <person name="Lin Q."/>
            <person name="Lim T.K."/>
            <person name="Dunstan N."/>
            <person name="Mirtschin P."/>
            <person name="Kumar P.P."/>
            <person name="Kini R.M."/>
        </authorList>
    </citation>
    <scope>NUCLEOTIDE SEQUENCE [MRNA]</scope>
    <scope>IDENTIFICATION BY MASS SPECTROMETRY</scope>
    <source>
        <tissue>Venom</tissue>
        <tissue>Venom gland</tissue>
    </source>
</reference>
<accession>F8J2D4</accession>
<sequence>MIAFIVLLSLAAVLQQSSGTVDFASESSNKKDYRKEIVDKHNALRRSVKPTARNMLQMEWNSHAAQNAKRWADRCTFAHSPPHTRTVGQLRCGENIFMSSQPFAWSGVVQAWYDEVKKFVYGIGAKPPGSVIGHYTQVVWYKSHLLGCASAKCSSTKYLYVCQYCPAGNIRGSIATPYKSGPTCGDCPSACVNGLCTNPCKYEDAFTNCNELAKETKCKTEWIKSKCPATCFCHTEII</sequence>
<dbReference type="EMBL" id="FJ752452">
    <property type="protein sequence ID" value="ACR78474.1"/>
    <property type="molecule type" value="mRNA"/>
</dbReference>
<dbReference type="SMR" id="F8J2D4"/>
<dbReference type="GO" id="GO:0005576">
    <property type="term" value="C:extracellular region"/>
    <property type="evidence" value="ECO:0007669"/>
    <property type="project" value="UniProtKB-SubCell"/>
</dbReference>
<dbReference type="GO" id="GO:0005246">
    <property type="term" value="F:calcium channel regulator activity"/>
    <property type="evidence" value="ECO:0007669"/>
    <property type="project" value="UniProtKB-KW"/>
</dbReference>
<dbReference type="GO" id="GO:0090729">
    <property type="term" value="F:toxin activity"/>
    <property type="evidence" value="ECO:0007669"/>
    <property type="project" value="UniProtKB-KW"/>
</dbReference>
<dbReference type="CDD" id="cd05383">
    <property type="entry name" value="CAP_CRISP"/>
    <property type="match status" value="1"/>
</dbReference>
<dbReference type="FunFam" id="1.10.10.740:FF:000001">
    <property type="entry name" value="Cysteine-rich secretory protein 2"/>
    <property type="match status" value="1"/>
</dbReference>
<dbReference type="FunFam" id="3.40.33.10:FF:000005">
    <property type="entry name" value="Cysteine-rich secretory protein 2"/>
    <property type="match status" value="1"/>
</dbReference>
<dbReference type="Gene3D" id="3.40.33.10">
    <property type="entry name" value="CAP"/>
    <property type="match status" value="1"/>
</dbReference>
<dbReference type="Gene3D" id="1.10.10.740">
    <property type="entry name" value="Crisp domain"/>
    <property type="match status" value="1"/>
</dbReference>
<dbReference type="InterPro" id="IPR018244">
    <property type="entry name" value="Allrgn_V5/Tpx1_CS"/>
</dbReference>
<dbReference type="InterPro" id="IPR014044">
    <property type="entry name" value="CAP_dom"/>
</dbReference>
<dbReference type="InterPro" id="IPR035940">
    <property type="entry name" value="CAP_sf"/>
</dbReference>
<dbReference type="InterPro" id="IPR042076">
    <property type="entry name" value="Crisp-like_dom"/>
</dbReference>
<dbReference type="InterPro" id="IPR001283">
    <property type="entry name" value="CRISP-related"/>
</dbReference>
<dbReference type="InterPro" id="IPR013871">
    <property type="entry name" value="Cysteine_rich_secretory"/>
</dbReference>
<dbReference type="InterPro" id="IPR034117">
    <property type="entry name" value="SCP_CRISP"/>
</dbReference>
<dbReference type="InterPro" id="IPR003582">
    <property type="entry name" value="ShKT_dom"/>
</dbReference>
<dbReference type="PANTHER" id="PTHR10334">
    <property type="entry name" value="CYSTEINE-RICH SECRETORY PROTEIN-RELATED"/>
    <property type="match status" value="1"/>
</dbReference>
<dbReference type="Pfam" id="PF00188">
    <property type="entry name" value="CAP"/>
    <property type="match status" value="1"/>
</dbReference>
<dbReference type="Pfam" id="PF08562">
    <property type="entry name" value="Crisp"/>
    <property type="match status" value="1"/>
</dbReference>
<dbReference type="PRINTS" id="PR00837">
    <property type="entry name" value="V5TPXLIKE"/>
</dbReference>
<dbReference type="SMART" id="SM00198">
    <property type="entry name" value="SCP"/>
    <property type="match status" value="1"/>
</dbReference>
<dbReference type="SUPFAM" id="SSF57546">
    <property type="entry name" value="Crisp domain-like"/>
    <property type="match status" value="1"/>
</dbReference>
<dbReference type="SUPFAM" id="SSF55797">
    <property type="entry name" value="PR-1-like"/>
    <property type="match status" value="1"/>
</dbReference>
<dbReference type="PROSITE" id="PS01009">
    <property type="entry name" value="CRISP_1"/>
    <property type="match status" value="1"/>
</dbReference>
<dbReference type="PROSITE" id="PS01010">
    <property type="entry name" value="CRISP_2"/>
    <property type="match status" value="1"/>
</dbReference>
<dbReference type="PROSITE" id="PS51670">
    <property type="entry name" value="SHKT"/>
    <property type="match status" value="1"/>
</dbReference>
<keyword id="KW-0108">Calcium channel impairing toxin</keyword>
<keyword id="KW-1015">Disulfide bond</keyword>
<keyword id="KW-0872">Ion channel impairing toxin</keyword>
<keyword id="KW-0528">Neurotoxin</keyword>
<keyword id="KW-0964">Secreted</keyword>
<keyword id="KW-0732">Signal</keyword>
<keyword id="KW-0800">Toxin</keyword>